<organism>
    <name type="scientific">Aspergillus sp. (strain MF297-2)</name>
    <dbReference type="NCBI Taxonomy" id="877550"/>
    <lineage>
        <taxon>Eukaryota</taxon>
        <taxon>Fungi</taxon>
        <taxon>Dikarya</taxon>
        <taxon>Ascomycota</taxon>
        <taxon>Pezizomycotina</taxon>
        <taxon>Eurotiomycetes</taxon>
        <taxon>Eurotiomycetidae</taxon>
        <taxon>Eurotiales</taxon>
        <taxon>Aspergillaceae</taxon>
        <taxon>Aspergillus</taxon>
    </lineage>
</organism>
<feature type="chain" id="PRO_0000448816" description="Efflux pump notK">
    <location>
        <begin position="1"/>
        <end position="563"/>
    </location>
</feature>
<feature type="transmembrane region" description="Helical" evidence="1">
    <location>
        <begin position="48"/>
        <end position="68"/>
    </location>
</feature>
<feature type="transmembrane region" description="Helical" evidence="1">
    <location>
        <begin position="78"/>
        <end position="98"/>
    </location>
</feature>
<feature type="transmembrane region" description="Helical" evidence="1">
    <location>
        <begin position="108"/>
        <end position="128"/>
    </location>
</feature>
<feature type="transmembrane region" description="Helical" evidence="1">
    <location>
        <begin position="138"/>
        <end position="158"/>
    </location>
</feature>
<feature type="transmembrane region" description="Helical" evidence="1">
    <location>
        <begin position="165"/>
        <end position="185"/>
    </location>
</feature>
<feature type="transmembrane region" description="Helical" evidence="1">
    <location>
        <begin position="197"/>
        <end position="217"/>
    </location>
</feature>
<feature type="transmembrane region" description="Helical" evidence="1">
    <location>
        <begin position="239"/>
        <end position="259"/>
    </location>
</feature>
<feature type="transmembrane region" description="Helical" evidence="1">
    <location>
        <begin position="270"/>
        <end position="290"/>
    </location>
</feature>
<feature type="transmembrane region" description="Helical" evidence="1">
    <location>
        <begin position="312"/>
        <end position="332"/>
    </location>
</feature>
<feature type="transmembrane region" description="Helical" evidence="1">
    <location>
        <begin position="345"/>
        <end position="365"/>
    </location>
</feature>
<feature type="transmembrane region" description="Helical" evidence="1">
    <location>
        <begin position="374"/>
        <end position="394"/>
    </location>
</feature>
<feature type="transmembrane region" description="Helical" evidence="1">
    <location>
        <begin position="406"/>
        <end position="426"/>
    </location>
</feature>
<feature type="transmembrane region" description="Helical" evidence="1">
    <location>
        <begin position="438"/>
        <end position="458"/>
    </location>
</feature>
<feature type="transmembrane region" description="Helical" evidence="1">
    <location>
        <begin position="509"/>
        <end position="529"/>
    </location>
</feature>
<feature type="region of interest" description="Disordered" evidence="2">
    <location>
        <begin position="1"/>
        <end position="32"/>
    </location>
</feature>
<feature type="region of interest" description="Disordered" evidence="2">
    <location>
        <begin position="538"/>
        <end position="563"/>
    </location>
</feature>
<feature type="compositionally biased region" description="Basic and acidic residues" evidence="2">
    <location>
        <begin position="547"/>
        <end position="563"/>
    </location>
</feature>
<accession>E1ACQ6</accession>
<evidence type="ECO:0000255" key="1"/>
<evidence type="ECO:0000256" key="2">
    <source>
        <dbReference type="SAM" id="MobiDB-lite"/>
    </source>
</evidence>
<evidence type="ECO:0000269" key="3">
    <source>
    </source>
</evidence>
<evidence type="ECO:0000303" key="4">
    <source>
    </source>
</evidence>
<evidence type="ECO:0000305" key="5"/>
<evidence type="ECO:0000305" key="6">
    <source>
    </source>
</evidence>
<evidence type="ECO:0000305" key="7">
    <source>
    </source>
</evidence>
<dbReference type="EMBL" id="HM622670">
    <property type="protein sequence ID" value="ADM34144.1"/>
    <property type="molecule type" value="Genomic_DNA"/>
</dbReference>
<dbReference type="SMR" id="E1ACQ6"/>
<dbReference type="GO" id="GO:0005886">
    <property type="term" value="C:plasma membrane"/>
    <property type="evidence" value="ECO:0007669"/>
    <property type="project" value="UniProtKB-SubCell"/>
</dbReference>
<dbReference type="GO" id="GO:0022857">
    <property type="term" value="F:transmembrane transporter activity"/>
    <property type="evidence" value="ECO:0007669"/>
    <property type="project" value="InterPro"/>
</dbReference>
<dbReference type="CDD" id="cd17502">
    <property type="entry name" value="MFS_Azr1_MDR_like"/>
    <property type="match status" value="1"/>
</dbReference>
<dbReference type="Gene3D" id="1.20.1250.20">
    <property type="entry name" value="MFS general substrate transporter like domains"/>
    <property type="match status" value="2"/>
</dbReference>
<dbReference type="InterPro" id="IPR011701">
    <property type="entry name" value="MFS"/>
</dbReference>
<dbReference type="InterPro" id="IPR020846">
    <property type="entry name" value="MFS_dom"/>
</dbReference>
<dbReference type="InterPro" id="IPR036259">
    <property type="entry name" value="MFS_trans_sf"/>
</dbReference>
<dbReference type="PANTHER" id="PTHR23501">
    <property type="entry name" value="MAJOR FACILITATOR SUPERFAMILY"/>
    <property type="match status" value="1"/>
</dbReference>
<dbReference type="PANTHER" id="PTHR23501:SF177">
    <property type="entry name" value="MAJOR FACILITATOR SUPERFAMILY (MFS) PROFILE DOMAIN-CONTAINING PROTEIN-RELATED"/>
    <property type="match status" value="1"/>
</dbReference>
<dbReference type="Pfam" id="PF07690">
    <property type="entry name" value="MFS_1"/>
    <property type="match status" value="1"/>
</dbReference>
<dbReference type="SUPFAM" id="SSF103473">
    <property type="entry name" value="MFS general substrate transporter"/>
    <property type="match status" value="1"/>
</dbReference>
<dbReference type="PROSITE" id="PS50850">
    <property type="entry name" value="MFS"/>
    <property type="match status" value="1"/>
</dbReference>
<comment type="function">
    <text evidence="6 7">Efflux pump; part of the gene cluster that mediates the biosynthesis of notoamide, a fungal indole alkaloid that belongs to a family of natural products containing a characteristic bicyclo[2.2.2]diazaoctane core.</text>
</comment>
<comment type="subcellular location">
    <subcellularLocation>
        <location evidence="5">Cell membrane</location>
        <topology evidence="1">Multi-pass membrane protein</topology>
    </subcellularLocation>
</comment>
<comment type="biotechnology">
    <text evidence="3">Notoamides have been shown to exhibit antitumoral activities (PubMed:17304611). Notoamides A-C show moderate cytotoxicity against HeLa and L1210 cells with IC(50) values in the range of 22-52 mg/ml, but the IC(50) value of notoamide D is greater than 100 mg/ml (PubMed:17304611). Moreover, notoamide C induces G2/M-cell cycle arrest at a concentration of 6.3 mg/ml (PubMed:17304611).</text>
</comment>
<comment type="similarity">
    <text evidence="5">Belongs to the major facilitator superfamily. TCR/Tet family.</text>
</comment>
<gene>
    <name evidence="4" type="primary">notK</name>
</gene>
<keyword id="KW-1003">Cell membrane</keyword>
<keyword id="KW-0472">Membrane</keyword>
<keyword id="KW-0812">Transmembrane</keyword>
<keyword id="KW-1133">Transmembrane helix</keyword>
<keyword id="KW-0813">Transport</keyword>
<name>NOTK_ASPSM</name>
<sequence>MTKDEDSGTTDGGYSTPDIAVQEKQDQPPAPEPEYATGFRLAAIMSTIFLSTLLAALDIGIVATAIPGITDDFHRLDDVGWYGGACFLLVGSSAPMWGKLYKYFSAQLVYLVSVVIFLVGSIVAAAAPNSAALIVGRALQGWGCSGTLGGSVLMISYVAEPQKRAMLIGMWMSVFMFSTIIGPLLGGAFTSEVTWRWCFWINLPVGGPVIALVVLFFEVPKHIKPAPATWVEILRQLDLPGFALLLTSLVCLTVALQWGGQTKSWSYGSVIATLVMWVVLTIAFFVVEWIQGDYAMVPLALLKPRLVWTNALYGWIANLANFQVLFYLPIYFQSIHGQSAIASGVNSLPFMAFFAAGSMLSGFLIGKTRLLQPYEFASGVLATVGAALLYTLDIDSSKARYIGPQVIFGIGIGLGNQVPMTALESFSKPEHIAPTTGVMLMCNSISGAYFVTAAQSIFANYMLKELASIAPDMDPIQVLTTGASEVSHVFQGAELEAVLAAYLAGIKDVFAFSLAGAAFTVVLSLAIPFKKLPNMFAGPSNGQEEEEGKKDGPAEKKEDEVAV</sequence>
<proteinExistence type="evidence at protein level"/>
<reference key="1">
    <citation type="journal article" date="2010" name="J. Am. Chem. Soc.">
        <title>Genome-based characterization of two prenylation steps in the assembly of the stephacidin and notoamide anticancer agents in a marine-derived Aspergillus sp.</title>
        <authorList>
            <person name="Ding Y."/>
            <person name="de Wet J.R."/>
            <person name="Cavalcoli J."/>
            <person name="Li S."/>
            <person name="Greshock T.J."/>
            <person name="Miller K.A."/>
            <person name="Finefield J.M."/>
            <person name="Sunderhaus J.D."/>
            <person name="McAfoos T.J."/>
            <person name="Tsukamoto S."/>
            <person name="Williams R.M."/>
            <person name="Sherman D.H."/>
        </authorList>
    </citation>
    <scope>NUCLEOTIDE SEQUENCE [GENOMIC DNA]</scope>
    <scope>FUNCTION</scope>
    <source>
        <strain>MF297-2</strain>
    </source>
</reference>
<reference key="2">
    <citation type="journal article" date="2007" name="Angew. Chem. Int. Ed.">
        <title>Notoamides A-D: prenylated indole alkaloids isolated from a marine-derived fungus, Aspergillus sp.</title>
        <authorList>
            <person name="Kato H."/>
            <person name="Yoshida T."/>
            <person name="Tokue T."/>
            <person name="Nojiri Y."/>
            <person name="Hirota H."/>
            <person name="Ohta T."/>
            <person name="Williams R.M."/>
            <person name="Tsukamoto S."/>
        </authorList>
    </citation>
    <scope>BIOTECHNOLOGY</scope>
</reference>
<reference key="3">
    <citation type="journal article" date="2012" name="Med. Chem. Commun.">
        <title>Comparative analysis of the biosynthetic systems for fungal bicyclo[2.2.2]diazaoctane indole alkaloids: the (+)/(-)-notoamide, paraherquamide and malbrancheamide pathways.</title>
        <authorList>
            <person name="Li S."/>
            <person name="Anand K."/>
            <person name="Tran H."/>
            <person name="Yu F."/>
            <person name="Finefield J.M."/>
            <person name="Sunderhaus J.D."/>
            <person name="McAfoos T.J."/>
            <person name="Tsukamoto S."/>
            <person name="Williams R.M."/>
            <person name="Sherman D.H."/>
        </authorList>
    </citation>
    <scope>FUNCTION</scope>
</reference>
<protein>
    <recommendedName>
        <fullName evidence="4">Efflux pump notK</fullName>
    </recommendedName>
    <alternativeName>
        <fullName evidence="4">Notoamide biosynthesis cluster protein K</fullName>
    </alternativeName>
</protein>